<evidence type="ECO:0000255" key="1"/>
<evidence type="ECO:0000256" key="2">
    <source>
        <dbReference type="SAM" id="MobiDB-lite"/>
    </source>
</evidence>
<evidence type="ECO:0000269" key="3">
    <source>
    </source>
</evidence>
<evidence type="ECO:0000269" key="4">
    <source>
    </source>
</evidence>
<evidence type="ECO:0000269" key="5">
    <source>
    </source>
</evidence>
<evidence type="ECO:0000269" key="6">
    <source>
    </source>
</evidence>
<evidence type="ECO:0000269" key="7">
    <source>
    </source>
</evidence>
<evidence type="ECO:0000269" key="8">
    <source>
    </source>
</evidence>
<evidence type="ECO:0000269" key="9">
    <source>
    </source>
</evidence>
<evidence type="ECO:0000269" key="10">
    <source>
    </source>
</evidence>
<evidence type="ECO:0000305" key="11"/>
<evidence type="ECO:0000305" key="12">
    <source>
    </source>
</evidence>
<evidence type="ECO:0000312" key="13">
    <source>
        <dbReference type="HGNC" id="HGNC:18828"/>
    </source>
</evidence>
<evidence type="ECO:0007744" key="14">
    <source>
    </source>
</evidence>
<feature type="transit peptide" description="Mitochondrion" evidence="1">
    <location>
        <begin position="1"/>
        <end position="24"/>
    </location>
</feature>
<feature type="chain" id="PRO_0000005464" description="Complex I intermediate-associated protein 30, mitochondrial">
    <location>
        <begin position="25"/>
        <end position="327"/>
    </location>
</feature>
<feature type="region of interest" description="Disordered" evidence="2">
    <location>
        <begin position="42"/>
        <end position="63"/>
    </location>
</feature>
<feature type="compositionally biased region" description="Basic and acidic residues" evidence="2">
    <location>
        <begin position="53"/>
        <end position="63"/>
    </location>
</feature>
<feature type="modified residue" description="Phosphoserine" evidence="14">
    <location>
        <position position="318"/>
    </location>
</feature>
<feature type="sequence variant" id="VAR_013559" description="In dbSNP:rs1899." evidence="3">
    <original>R</original>
    <variation>H</variation>
    <location>
        <position position="9"/>
    </location>
</feature>
<feature type="sequence variant" id="VAR_013560" description="In dbSNP:rs3204853." evidence="3">
    <original>R</original>
    <variation>L</variation>
    <location>
        <position position="31"/>
    </location>
</feature>
<feature type="sequence variant" id="VAR_013561" description="In dbSNP:rs35227875." evidence="3">
    <original>E</original>
    <variation>K</variation>
    <location>
        <position position="176"/>
    </location>
</feature>
<feature type="sequence variant" id="VAR_081445" description="In MC1DN11; dbSNP:rs387906956." evidence="6">
    <original>T</original>
    <variation>P</variation>
    <location>
        <position position="207"/>
    </location>
</feature>
<feature type="sequence variant" id="VAR_081446" description="In MC1DN11; dbSNP:rs387906958." evidence="8">
    <original>R</original>
    <variation>C</variation>
    <location>
        <position position="211"/>
    </location>
</feature>
<feature type="sequence variant" id="VAR_081447" description="In MC1DN11; dbSNP:rs376344575." evidence="8">
    <original>G</original>
    <variation>R</variation>
    <location>
        <position position="245"/>
    </location>
</feature>
<feature type="sequence variant" id="VAR_081448" description="In MC1DN11; due to a nucleotide substitution located in the splice site consensus sequence at the end of exon 3; patient cells contain transcripts lacking the final 6 base pairs of exon 3 but also contain normally spliced transcripts corresponding to protein variant R-253." evidence="6">
    <location>
        <begin position="252"/>
        <end position="253"/>
    </location>
</feature>
<feature type="sequence variant" id="VAR_081449" description="In MC1DN11; due to a nucleotide substitution located in the splice site consensus sequence at the end of exon 3; patient cells contain normally spliced transcripts corresponding to protein variant R-253 but also transcripts lacking the final 6 base pairs of exon 3 and corresponding to protein variant 252-VK-253 del; dbSNP:rs387906957." evidence="6">
    <original>K</original>
    <variation>R</variation>
    <location>
        <position position="253"/>
    </location>
</feature>
<feature type="sequence variant" id="VAR_013562" description="In dbSNP:rs12900702." evidence="3">
    <original>A</original>
    <variation>G</variation>
    <location>
        <position position="314"/>
    </location>
</feature>
<feature type="sequence conflict" description="In Ref. 1; AAD34060." evidence="11" ref="1">
    <original>T</original>
    <variation>S</variation>
    <location>
        <position position="178"/>
    </location>
</feature>
<feature type="sequence conflict" description="In Ref. 1; AAD34060." evidence="11" ref="1">
    <original>E</original>
    <variation>K</variation>
    <location>
        <position position="195"/>
    </location>
</feature>
<gene>
    <name evidence="13" type="primary">NDUFAF1</name>
    <name type="synonym">CIA30</name>
    <name type="ORF">CGI-65</name>
</gene>
<comment type="function">
    <text evidence="4 6 9">As part of the MCIA complex, involved in the assembly of the mitochondrial complex I.</text>
</comment>
<comment type="subunit">
    <text evidence="5 6 7 9 10">Part of the mitochondrial complex I assembly/MCIA complex that comprises at least the core subunits TMEM126B, NDUFAF1, ECSIT and ACAD9 and complement subunits such as COA1 and TMEM186 (PubMed:32320651). Interacts with ECSIT (PubMed:17344420). Interacts with ACAD9 (PubMed:20816094). At early stages of complex I assembly, it is found in intermediate subcomplexes that contain different subunits including NDUFB6, NDUFA6, NDUFA9, NDUFS3, NDUFS7, ND1, ND2 and ND3 (PubMed:17557076). Interacts with TMEM70 and TMEM242 (PubMed:33753518).</text>
</comment>
<comment type="interaction">
    <interactant intactId="EBI-741874">
        <id>Q9Y375</id>
    </interactant>
    <interactant intactId="EBI-8652812">
        <id>P54315</id>
        <label>PNLIPRP1</label>
    </interactant>
    <organismsDiffer>false</organismsDiffer>
    <experiments>3</experiments>
</comment>
<comment type="interaction">
    <interactant intactId="EBI-741874">
        <id>Q9Y375</id>
    </interactant>
    <interactant intactId="EBI-8644112">
        <id>Q9BRI3</id>
        <label>SLC30A2</label>
    </interactant>
    <organismsDiffer>false</organismsDiffer>
    <experiments>3</experiments>
</comment>
<comment type="interaction">
    <interactant intactId="EBI-741874">
        <id>Q9Y375</id>
    </interactant>
    <interactant intactId="EBI-727240">
        <id>Q9UNK0</id>
        <label>STX8</label>
    </interactant>
    <organismsDiffer>false</organismsDiffer>
    <experiments>3</experiments>
</comment>
<comment type="interaction">
    <interactant intactId="EBI-741874">
        <id>Q9Y375</id>
    </interactant>
    <interactant intactId="EBI-2548832">
        <id>Q8N661</id>
        <label>TMEM86B</label>
    </interactant>
    <organismsDiffer>false</organismsDiffer>
    <experiments>3</experiments>
</comment>
<comment type="interaction">
    <interactant intactId="EBI-741874">
        <id>Q9Y375</id>
    </interactant>
    <interactant intactId="EBI-12111910">
        <id>Q5BJF2</id>
        <label>TMEM97</label>
    </interactant>
    <organismsDiffer>false</organismsDiffer>
    <experiments>3</experiments>
</comment>
<comment type="interaction">
    <interactant intactId="EBI-741874">
        <id>Q9Y375</id>
    </interactant>
    <interactant intactId="EBI-751210">
        <id>Q96EC8</id>
        <label>YIPF6</label>
    </interactant>
    <organismsDiffer>false</organismsDiffer>
    <experiments>3</experiments>
</comment>
<comment type="subcellular location">
    <subcellularLocation>
        <location evidence="4 6">Mitochondrion</location>
    </subcellularLocation>
    <subcellularLocation>
        <location evidence="12">Mitochondrion matrix</location>
    </subcellularLocation>
    <text evidence="12">Peripherally associated with the matrix face of the mitochondrial inner membrane.</text>
</comment>
<comment type="tissue specificity">
    <text evidence="3">Ubiquitous.</text>
</comment>
<comment type="disease" evidence="6 8">
    <disease id="DI-05409">
        <name>Mitochondrial complex I deficiency, nuclear type 11</name>
        <acronym>MC1DN11</acronym>
        <description>A form of mitochondrial complex I deficiency, the most common biochemical signature of mitochondrial disorders, a group of highly heterogeneous conditions characterized by defective oxidative phosphorylation, which collectively affects 1 in 5-10000 live births. Clinical disorders have variable severity, ranging from lethal neonatal disease to adult-onset neurodegenerative disorders. Phenotypes include macrocephaly with progressive leukodystrophy, non-specific encephalopathy, cardiomyopathy, myopathy, liver disease, Leigh syndrome, Leber hereditary optic neuropathy, and some forms of Parkinson disease. MC1DN11 transmission pattern is consistent with autosomal recessive inheritance.</description>
        <dbReference type="MIM" id="618234"/>
    </disease>
    <text>The disease is caused by variants affecting the gene represented in this entry.</text>
</comment>
<comment type="similarity">
    <text evidence="11">Belongs to the CIA30 family.</text>
</comment>
<comment type="caution">
    <text evidence="11">There is a putative pseudogene of CIA30 on chromosome 19 (19p12).</text>
</comment>
<accession>Q9Y375</accession>
<accession>Q9BVZ5</accession>
<sequence>MALVHKLLRGTYFLRKFSKPTSALYPFLGIRFAEYSSSLQKPVASPGKASSQRKTEGDLQGDHQKEVALDITSSEEKPDVSFDKAIRDEAIYHFRLLKDEIVDHWRGPEGHPLHEVLLEQAKVVWQFRGKEDLDKWTVTSDKTIGGRSEVFLKMGKNNQSALLYGTLSSEAPQDGESTRSGYCAMISRIPRGAFERKMSYDWSQFNTLYLRVRGDGRPWMVNIKEDTDFFQRTNQMYSYFMFTRGGPYWQEVKIPFSKFFFSNRGRIRDVQHELPLDKISSIGFTLADKVDGPFFLEIDFIGVFTDPAHTEEFAYENSPELNPRLFK</sequence>
<keyword id="KW-0143">Chaperone</keyword>
<keyword id="KW-0225">Disease variant</keyword>
<keyword id="KW-0496">Mitochondrion</keyword>
<keyword id="KW-0597">Phosphoprotein</keyword>
<keyword id="KW-1274">Primary mitochondrial disease</keyword>
<keyword id="KW-1267">Proteomics identification</keyword>
<keyword id="KW-1185">Reference proteome</keyword>
<keyword id="KW-0809">Transit peptide</keyword>
<organism>
    <name type="scientific">Homo sapiens</name>
    <name type="common">Human</name>
    <dbReference type="NCBI Taxonomy" id="9606"/>
    <lineage>
        <taxon>Eukaryota</taxon>
        <taxon>Metazoa</taxon>
        <taxon>Chordata</taxon>
        <taxon>Craniata</taxon>
        <taxon>Vertebrata</taxon>
        <taxon>Euteleostomi</taxon>
        <taxon>Mammalia</taxon>
        <taxon>Eutheria</taxon>
        <taxon>Euarchontoglires</taxon>
        <taxon>Primates</taxon>
        <taxon>Haplorrhini</taxon>
        <taxon>Catarrhini</taxon>
        <taxon>Hominidae</taxon>
        <taxon>Homo</taxon>
    </lineage>
</organism>
<dbReference type="EMBL" id="AF151823">
    <property type="protein sequence ID" value="AAD34060.1"/>
    <property type="molecule type" value="mRNA"/>
</dbReference>
<dbReference type="EMBL" id="BC000780">
    <property type="protein sequence ID" value="AAH00780.1"/>
    <property type="molecule type" value="mRNA"/>
</dbReference>
<dbReference type="CCDS" id="CCDS10075.1"/>
<dbReference type="RefSeq" id="NP_057097.2">
    <property type="nucleotide sequence ID" value="NM_016013.3"/>
</dbReference>
<dbReference type="RefSeq" id="XP_006720618.1">
    <property type="nucleotide sequence ID" value="XM_006720555.4"/>
</dbReference>
<dbReference type="RefSeq" id="XP_011519960.1">
    <property type="nucleotide sequence ID" value="XM_011521658.2"/>
</dbReference>
<dbReference type="RefSeq" id="XP_047288593.1">
    <property type="nucleotide sequence ID" value="XM_047432637.1"/>
</dbReference>
<dbReference type="RefSeq" id="XP_054234113.1">
    <property type="nucleotide sequence ID" value="XM_054378138.1"/>
</dbReference>
<dbReference type="RefSeq" id="XP_054234114.1">
    <property type="nucleotide sequence ID" value="XM_054378139.1"/>
</dbReference>
<dbReference type="RefSeq" id="XP_054234115.1">
    <property type="nucleotide sequence ID" value="XM_054378140.1"/>
</dbReference>
<dbReference type="SASBDB" id="Q9Y375"/>
<dbReference type="SMR" id="Q9Y375"/>
<dbReference type="BioGRID" id="119292">
    <property type="interactions" value="170"/>
</dbReference>
<dbReference type="ComplexPortal" id="CPX-6322">
    <property type="entry name" value="Mitochondrial complex I intermediate assembly (MCIA) complex"/>
</dbReference>
<dbReference type="CORUM" id="Q9Y375"/>
<dbReference type="FunCoup" id="Q9Y375">
    <property type="interactions" value="1003"/>
</dbReference>
<dbReference type="IntAct" id="Q9Y375">
    <property type="interactions" value="99"/>
</dbReference>
<dbReference type="MINT" id="Q9Y375"/>
<dbReference type="STRING" id="9606.ENSP00000260361"/>
<dbReference type="BindingDB" id="Q9Y375"/>
<dbReference type="ChEMBL" id="CHEMBL2363065"/>
<dbReference type="DrugCentral" id="Q9Y375"/>
<dbReference type="iPTMnet" id="Q9Y375"/>
<dbReference type="PhosphoSitePlus" id="Q9Y375"/>
<dbReference type="BioMuta" id="NDUFAF1"/>
<dbReference type="DMDM" id="21542405"/>
<dbReference type="jPOST" id="Q9Y375"/>
<dbReference type="MassIVE" id="Q9Y375"/>
<dbReference type="PaxDb" id="9606-ENSP00000260361"/>
<dbReference type="PeptideAtlas" id="Q9Y375"/>
<dbReference type="ProteomicsDB" id="85980"/>
<dbReference type="Pumba" id="Q9Y375"/>
<dbReference type="Antibodypedia" id="23296">
    <property type="antibodies" value="163 antibodies from 28 providers"/>
</dbReference>
<dbReference type="DNASU" id="51103"/>
<dbReference type="Ensembl" id="ENST00000260361.9">
    <property type="protein sequence ID" value="ENSP00000260361.4"/>
    <property type="gene ID" value="ENSG00000137806.10"/>
</dbReference>
<dbReference type="Ensembl" id="ENST00000560978.2">
    <property type="protein sequence ID" value="ENSP00000453944.2"/>
    <property type="gene ID" value="ENSG00000137806.10"/>
</dbReference>
<dbReference type="GeneID" id="51103"/>
<dbReference type="KEGG" id="hsa:51103"/>
<dbReference type="MANE-Select" id="ENST00000260361.9">
    <property type="protein sequence ID" value="ENSP00000260361.4"/>
    <property type="RefSeq nucleotide sequence ID" value="NM_016013.4"/>
    <property type="RefSeq protein sequence ID" value="NP_057097.2"/>
</dbReference>
<dbReference type="UCSC" id="uc001znx.4">
    <property type="organism name" value="human"/>
</dbReference>
<dbReference type="AGR" id="HGNC:18828"/>
<dbReference type="CTD" id="51103"/>
<dbReference type="DisGeNET" id="51103"/>
<dbReference type="GeneCards" id="NDUFAF1"/>
<dbReference type="HGNC" id="HGNC:18828">
    <property type="gene designation" value="NDUFAF1"/>
</dbReference>
<dbReference type="HPA" id="ENSG00000137806">
    <property type="expression patterns" value="Low tissue specificity"/>
</dbReference>
<dbReference type="MalaCards" id="NDUFAF1"/>
<dbReference type="MIM" id="606934">
    <property type="type" value="gene"/>
</dbReference>
<dbReference type="MIM" id="618234">
    <property type="type" value="phenotype"/>
</dbReference>
<dbReference type="neXtProt" id="NX_Q9Y375"/>
<dbReference type="OpenTargets" id="ENSG00000137806"/>
<dbReference type="Orphanet" id="2609">
    <property type="disease" value="Isolated complex I deficiency"/>
</dbReference>
<dbReference type="PharmGKB" id="PA134934729"/>
<dbReference type="VEuPathDB" id="HostDB:ENSG00000137806"/>
<dbReference type="eggNOG" id="KOG2435">
    <property type="taxonomic scope" value="Eukaryota"/>
</dbReference>
<dbReference type="GeneTree" id="ENSGT00390000007200"/>
<dbReference type="HOGENOM" id="CLU_059028_2_0_1"/>
<dbReference type="InParanoid" id="Q9Y375"/>
<dbReference type="OMA" id="KRTGYAN"/>
<dbReference type="OrthoDB" id="42561at2759"/>
<dbReference type="PAN-GO" id="Q9Y375">
    <property type="GO annotations" value="4 GO annotations based on evolutionary models"/>
</dbReference>
<dbReference type="PhylomeDB" id="Q9Y375"/>
<dbReference type="TreeFam" id="TF314819"/>
<dbReference type="PathwayCommons" id="Q9Y375"/>
<dbReference type="Reactome" id="R-HSA-6799198">
    <property type="pathway name" value="Complex I biogenesis"/>
</dbReference>
<dbReference type="SignaLink" id="Q9Y375"/>
<dbReference type="BioGRID-ORCS" id="51103">
    <property type="hits" value="219 hits in 1175 CRISPR screens"/>
</dbReference>
<dbReference type="ChiTaRS" id="NDUFAF1">
    <property type="organism name" value="human"/>
</dbReference>
<dbReference type="GeneWiki" id="NDUFAF1"/>
<dbReference type="GenomeRNAi" id="51103"/>
<dbReference type="Pharos" id="Q9Y375">
    <property type="development level" value="Tclin"/>
</dbReference>
<dbReference type="PRO" id="PR:Q9Y375"/>
<dbReference type="Proteomes" id="UP000005640">
    <property type="component" value="Chromosome 15"/>
</dbReference>
<dbReference type="RNAct" id="Q9Y375">
    <property type="molecule type" value="protein"/>
</dbReference>
<dbReference type="Bgee" id="ENSG00000137806">
    <property type="expression patterns" value="Expressed in apex of heart and 197 other cell types or tissues"/>
</dbReference>
<dbReference type="ExpressionAtlas" id="Q9Y375">
    <property type="expression patterns" value="baseline and differential"/>
</dbReference>
<dbReference type="GO" id="GO:0005829">
    <property type="term" value="C:cytosol"/>
    <property type="evidence" value="ECO:0000314"/>
    <property type="project" value="HPA"/>
</dbReference>
<dbReference type="GO" id="GO:0005743">
    <property type="term" value="C:mitochondrial inner membrane"/>
    <property type="evidence" value="ECO:0000304"/>
    <property type="project" value="Reactome"/>
</dbReference>
<dbReference type="GO" id="GO:0005759">
    <property type="term" value="C:mitochondrial matrix"/>
    <property type="evidence" value="ECO:0007669"/>
    <property type="project" value="UniProtKB-SubCell"/>
</dbReference>
<dbReference type="GO" id="GO:0005739">
    <property type="term" value="C:mitochondrion"/>
    <property type="evidence" value="ECO:0000314"/>
    <property type="project" value="UniProtKB"/>
</dbReference>
<dbReference type="GO" id="GO:0051082">
    <property type="term" value="F:unfolded protein binding"/>
    <property type="evidence" value="ECO:0000318"/>
    <property type="project" value="GO_Central"/>
</dbReference>
<dbReference type="GO" id="GO:0051131">
    <property type="term" value="P:chaperone-mediated protein complex assembly"/>
    <property type="evidence" value="ECO:0000314"/>
    <property type="project" value="UniProtKB"/>
</dbReference>
<dbReference type="GO" id="GO:0006120">
    <property type="term" value="P:mitochondrial electron transport, NADH to ubiquinone"/>
    <property type="evidence" value="ECO:0000318"/>
    <property type="project" value="GO_Central"/>
</dbReference>
<dbReference type="GO" id="GO:0032981">
    <property type="term" value="P:mitochondrial respiratory chain complex I assembly"/>
    <property type="evidence" value="ECO:0000315"/>
    <property type="project" value="UniProtKB"/>
</dbReference>
<dbReference type="GO" id="GO:0065003">
    <property type="term" value="P:protein-containing complex assembly"/>
    <property type="evidence" value="ECO:0000303"/>
    <property type="project" value="UniProtKB"/>
</dbReference>
<dbReference type="Gene3D" id="2.60.120.430">
    <property type="entry name" value="Galactose-binding lectin"/>
    <property type="match status" value="1"/>
</dbReference>
<dbReference type="InterPro" id="IPR008979">
    <property type="entry name" value="Galactose-bd-like_sf"/>
</dbReference>
<dbReference type="InterPro" id="IPR013857">
    <property type="entry name" value="NADH-UbQ_OxRdtase-assoc_prot30"/>
</dbReference>
<dbReference type="InterPro" id="IPR039131">
    <property type="entry name" value="NDUFAF1"/>
</dbReference>
<dbReference type="PANTHER" id="PTHR13194">
    <property type="entry name" value="COMPLEX I INTERMEDIATE-ASSOCIATED PROTEIN 30"/>
    <property type="match status" value="1"/>
</dbReference>
<dbReference type="PANTHER" id="PTHR13194:SF23">
    <property type="entry name" value="COMPLEX I INTERMEDIATE-ASSOCIATED PROTEIN 30, MITOCHONDRIAL"/>
    <property type="match status" value="1"/>
</dbReference>
<dbReference type="Pfam" id="PF08547">
    <property type="entry name" value="CIA30"/>
    <property type="match status" value="1"/>
</dbReference>
<dbReference type="SUPFAM" id="SSF49785">
    <property type="entry name" value="Galactose-binding domain-like"/>
    <property type="match status" value="1"/>
</dbReference>
<protein>
    <recommendedName>
        <fullName evidence="11">Complex I intermediate-associated protein 30, mitochondrial</fullName>
    </recommendedName>
    <alternativeName>
        <fullName>NADH dehydrogenase [ubiquinone] 1 alpha subcomplex assembly factor 1</fullName>
    </alternativeName>
</protein>
<proteinExistence type="evidence at protein level"/>
<reference key="1">
    <citation type="journal article" date="2000" name="Genome Res.">
        <title>Identification of novel human genes evolutionarily conserved in Caenorhabditis elegans by comparative proteomics.</title>
        <authorList>
            <person name="Lai C.-H."/>
            <person name="Chou C.-Y."/>
            <person name="Ch'ang L.-Y."/>
            <person name="Liu C.-S."/>
            <person name="Lin W.-C."/>
        </authorList>
    </citation>
    <scope>NUCLEOTIDE SEQUENCE [LARGE SCALE MRNA]</scope>
</reference>
<reference key="2">
    <citation type="journal article" date="2004" name="Genome Res.">
        <title>The status, quality, and expansion of the NIH full-length cDNA project: the Mammalian Gene Collection (MGC).</title>
        <authorList>
            <consortium name="The MGC Project Team"/>
        </authorList>
    </citation>
    <scope>NUCLEOTIDE SEQUENCE [LARGE SCALE MRNA]</scope>
    <source>
        <tissue>Placenta</tissue>
    </source>
</reference>
<reference key="3">
    <citation type="journal article" date="2002" name="Hum. Genet.">
        <title>CIA30 complex I assembly factor: a candidate for human complex I deficiency?</title>
        <authorList>
            <person name="Janssen R."/>
            <person name="Smeitink J."/>
            <person name="Smeets R."/>
            <person name="van den Heuvel L."/>
        </authorList>
    </citation>
    <scope>NUCLEOTIDE SEQUENCE [MRNA]</scope>
    <scope>TISSUE SPECIFICITY</scope>
    <scope>VARIANTS HIS-9; LEU-31; LYS-176 AND GLY-314</scope>
</reference>
<reference key="4">
    <citation type="journal article" date="2005" name="FEBS J.">
        <title>Human mitochondrial complex I assembly is mediated by NDUFAF1.</title>
        <authorList>
            <person name="Vogel R.O."/>
            <person name="Janssen R.J."/>
            <person name="Ugalde C."/>
            <person name="Grovenstein M."/>
            <person name="Huijbens R.J."/>
            <person name="Visch H.J."/>
            <person name="van den Heuvel L.P."/>
            <person name="Willems P.H."/>
            <person name="Zeviani M."/>
            <person name="Smeitink J.A."/>
            <person name="Nijtmans L.G."/>
        </authorList>
    </citation>
    <scope>FUNCTION</scope>
    <scope>SUBCELLULAR LOCATION</scope>
</reference>
<reference key="5">
    <citation type="journal article" date="2007" name="EMBO J.">
        <title>Human CIA30 is involved in the early assembly of mitochondrial complex I and mutations in its gene cause disease.</title>
        <authorList>
            <person name="Dunning C.J."/>
            <person name="McKenzie M."/>
            <person name="Sugiana C."/>
            <person name="Lazarou M."/>
            <person name="Silke J."/>
            <person name="Connelly A."/>
            <person name="Fletcher J.M."/>
            <person name="Kirby D.M."/>
            <person name="Thorburn D.R."/>
            <person name="Ryan M.T."/>
        </authorList>
    </citation>
    <scope>FUNCTION</scope>
    <scope>SUBCELLULAR LOCATION</scope>
    <scope>SUBUNIT</scope>
    <scope>INVOLVEMENT IN MC1DN11</scope>
    <scope>VARIANTS MC1DN11 PRO-207; 252-VAL-LYS-253 DEL AND ARG-253</scope>
</reference>
<reference key="6">
    <citation type="journal article" date="2007" name="Genes Dev.">
        <title>Cytosolic signaling protein Ecsit also localizes to mitochondria where it interacts with chaperone NDUFAF1 and functions in complex I assembly.</title>
        <authorList>
            <person name="Vogel R.O."/>
            <person name="Janssen R.J.R.J."/>
            <person name="van den Brand M.A.M."/>
            <person name="Dieteren C.E.J."/>
            <person name="Verkaart S."/>
            <person name="Koopman W.J.H."/>
            <person name="Willems P.H.G.M."/>
            <person name="Pluk W."/>
            <person name="van den Heuvel L.P.W.J."/>
            <person name="Smeitink J.A.M."/>
            <person name="Nijtmans L.G.J."/>
        </authorList>
    </citation>
    <scope>INTERACTION WITH ECSIT</scope>
</reference>
<reference key="7">
    <citation type="journal article" date="2010" name="Cell Metab.">
        <title>Acyl-CoA dehydrogenase 9 is required for the biogenesis of oxidative phosphorylation complex I.</title>
        <authorList>
            <person name="Nouws J."/>
            <person name="Nijtmans L."/>
            <person name="Houten S.M."/>
            <person name="van den Brand M."/>
            <person name="Huynen M."/>
            <person name="Venselaar H."/>
            <person name="Hoefs S."/>
            <person name="Gloerich J."/>
            <person name="Kronick J."/>
            <person name="Hutchin T."/>
            <person name="Willems P."/>
            <person name="Rodenburg R."/>
            <person name="Wanders R."/>
            <person name="van den Heuvel L."/>
            <person name="Smeitink J."/>
            <person name="Vogel R.O."/>
        </authorList>
    </citation>
    <scope>INTERACTION WITH ACAD9</scope>
</reference>
<reference key="8">
    <citation type="journal article" date="2011" name="BMC Syst. Biol.">
        <title>Initial characterization of the human central proteome.</title>
        <authorList>
            <person name="Burkard T.R."/>
            <person name="Planyavsky M."/>
            <person name="Kaupe I."/>
            <person name="Breitwieser F.P."/>
            <person name="Buerckstuemmer T."/>
            <person name="Bennett K.L."/>
            <person name="Superti-Furga G."/>
            <person name="Colinge J."/>
        </authorList>
    </citation>
    <scope>IDENTIFICATION BY MASS SPECTROMETRY [LARGE SCALE ANALYSIS]</scope>
</reference>
<reference key="9">
    <citation type="journal article" date="2011" name="J. Med. Genet.">
        <title>Mutations in the mitochondrial complex I assembly factor NDUFAF1 cause fatal infantile hypertrophic cardiomyopathy.</title>
        <authorList>
            <person name="Fassone E."/>
            <person name="Taanman J.W."/>
            <person name="Hargreaves I.P."/>
            <person name="Sebire N.J."/>
            <person name="Cleary M.A."/>
            <person name="Burch M."/>
            <person name="Rahman S."/>
        </authorList>
    </citation>
    <scope>INVOLVEMENT IN MC1DN11</scope>
    <scope>VARIANTS MC1DN11 CYS-211 AND ARG-245</scope>
</reference>
<reference key="10">
    <citation type="journal article" date="2014" name="J. Proteomics">
        <title>An enzyme assisted RP-RPLC approach for in-depth analysis of human liver phosphoproteome.</title>
        <authorList>
            <person name="Bian Y."/>
            <person name="Song C."/>
            <person name="Cheng K."/>
            <person name="Dong M."/>
            <person name="Wang F."/>
            <person name="Huang J."/>
            <person name="Sun D."/>
            <person name="Wang L."/>
            <person name="Ye M."/>
            <person name="Zou H."/>
        </authorList>
    </citation>
    <scope>PHOSPHORYLATION [LARGE SCALE ANALYSIS] AT SER-318</scope>
    <scope>IDENTIFICATION BY MASS SPECTROMETRY [LARGE SCALE ANALYSIS]</scope>
    <source>
        <tissue>Liver</tissue>
    </source>
</reference>
<reference key="11">
    <citation type="journal article" date="2015" name="Proteomics">
        <title>N-terminome analysis of the human mitochondrial proteome.</title>
        <authorList>
            <person name="Vaca Jacome A.S."/>
            <person name="Rabilloud T."/>
            <person name="Schaeffer-Reiss C."/>
            <person name="Rompais M."/>
            <person name="Ayoub D."/>
            <person name="Lane L."/>
            <person name="Bairoch A."/>
            <person name="Van Dorsselaer A."/>
            <person name="Carapito C."/>
        </authorList>
    </citation>
    <scope>IDENTIFICATION BY MASS SPECTROMETRY [LARGE SCALE ANALYSIS]</scope>
</reference>
<reference key="12">
    <citation type="journal article" date="2020" name="Cell Rep.">
        <title>Dissecting the Roles of Mitochondrial Complex I Intermediate Assembly Complex Factors in the Biogenesis of Complex I.</title>
        <authorList>
            <person name="Formosa L.E."/>
            <person name="Muellner-Wong L."/>
            <person name="Reljic B."/>
            <person name="Sharpe A.J."/>
            <person name="Jackson T.D."/>
            <person name="Beilharz T.H."/>
            <person name="Stojanovski D."/>
            <person name="Lazarou M."/>
            <person name="Stroud D.A."/>
            <person name="Ryan M.T."/>
        </authorList>
    </citation>
    <scope>IDENTIFICATION IN THE MCIA COMPLEX</scope>
    <scope>FUNCTION</scope>
</reference>
<reference key="13">
    <citation type="journal article" date="2021" name="Proc. Natl. Acad. Sci. U.S.A.">
        <title>TMEM70 and TMEM242 help to assemble the rotor ring of human ATP synthase and interact with assembly factors for complex I.</title>
        <authorList>
            <person name="Carroll J."/>
            <person name="He J."/>
            <person name="Ding S."/>
            <person name="Fearnley I.M."/>
            <person name="Walker J.E."/>
        </authorList>
    </citation>
    <scope>INTERACTION WITH TMEM70 AND TMEM242</scope>
</reference>
<name>CIA30_HUMAN</name>